<proteinExistence type="evidence at protein level"/>
<protein>
    <recommendedName>
        <fullName>Collagen alpha-1(X) chain</fullName>
    </recommendedName>
</protein>
<reference key="1">
    <citation type="journal article" date="1986" name="J. Biol. Chem.">
        <title>The developmentally regulated type X collagen gene contains a long open reading frame without introns.</title>
        <authorList>
            <person name="Ninomiya Y."/>
            <person name="Gordon M."/>
            <person name="van der Rest M."/>
            <person name="Schmid T."/>
            <person name="Linsenmayer T."/>
            <person name="Olsen B.R."/>
        </authorList>
    </citation>
    <scope>NUCLEOTIDE SEQUENCE [GENOMIC DNA] OF 48-674</scope>
    <scope>PROTEIN SEQUENCE OF 103-117 AND 453-466</scope>
    <scope>HYDROXYLATION AT PRO-453 AND PRO-456</scope>
</reference>
<reference key="2">
    <citation type="journal article" date="1988" name="J. Biol. Chem.">
        <title>The type X collagen gene. Intron sequences split the 5'-untranslated region and separate the coding regions for the non-collagenous amino-terminal and triple-helical domains.</title>
        <authorList>
            <person name="LuValle P."/>
            <person name="Ninomiya Y."/>
            <person name="Rosenblum N.D."/>
            <person name="Olsen B.R."/>
        </authorList>
    </citation>
    <scope>NUCLEOTIDE SEQUENCE [GENOMIC DNA] OF 1-75</scope>
</reference>
<reference key="3">
    <citation type="journal article" date="1988" name="J. Biol. Chem.">
        <title>Monoclonal antibodies to type X collagen. Biosynthetic studies using an antibody to the amino-terminal domain.</title>
        <authorList>
            <person name="Summers T.A."/>
            <person name="Irwin M.H."/>
            <person name="Mayne R."/>
            <person name="Balian G."/>
        </authorList>
    </citation>
    <scope>PROTEIN SEQUENCE OF 19-34</scope>
</reference>
<reference key="4">
    <citation type="journal article" date="1989" name="J. Biol. Chem.">
        <title>The cloning and sequencing of alpha 1(VIII) collagen cDNAs demonstrate that type VIII collagen is a short chain collagen and contains triple-helical and carboxyl-terminal non-triple-helical domains similar to those of type X collagen.</title>
        <authorList>
            <person name="Yamaguchi N."/>
            <person name="Benya P.D."/>
            <person name="van der Rest M."/>
            <person name="Ninomiya Y."/>
        </authorList>
    </citation>
    <scope>SEQUENCE REVISION TO C-TERMINUS</scope>
</reference>
<gene>
    <name type="primary">COL10A1</name>
</gene>
<accession>P08125</accession>
<evidence type="ECO:0000250" key="1"/>
<evidence type="ECO:0000250" key="2">
    <source>
        <dbReference type="UniProtKB" id="Q03692"/>
    </source>
</evidence>
<evidence type="ECO:0000255" key="3">
    <source>
        <dbReference type="PROSITE-ProRule" id="PRU00368"/>
    </source>
</evidence>
<evidence type="ECO:0000256" key="4">
    <source>
        <dbReference type="SAM" id="MobiDB-lite"/>
    </source>
</evidence>
<evidence type="ECO:0000269" key="5">
    <source>
    </source>
</evidence>
<evidence type="ECO:0000269" key="6">
    <source>
    </source>
</evidence>
<evidence type="ECO:0000305" key="7"/>
<feature type="signal peptide" evidence="5">
    <location>
        <begin position="1"/>
        <end position="18"/>
    </location>
</feature>
<feature type="chain" id="PRO_0000005769" description="Collagen alpha-1(X) chain">
    <location>
        <begin position="19"/>
        <end position="674"/>
    </location>
</feature>
<feature type="domain" description="C1q" evidence="3">
    <location>
        <begin position="541"/>
        <end position="674"/>
    </location>
</feature>
<feature type="region of interest" description="Nonhelical region (NC2)">
    <location>
        <begin position="19"/>
        <end position="52"/>
    </location>
</feature>
<feature type="region of interest" description="Disordered" evidence="4">
    <location>
        <begin position="49"/>
        <end position="517"/>
    </location>
</feature>
<feature type="region of interest" description="Triple-helical region">
    <location>
        <begin position="53"/>
        <end position="512"/>
    </location>
</feature>
<feature type="region of interest" description="Nonhelical region (NC1)">
    <location>
        <begin position="513"/>
        <end position="674"/>
    </location>
</feature>
<feature type="compositionally biased region" description="Pro residues" evidence="4">
    <location>
        <begin position="83"/>
        <end position="92"/>
    </location>
</feature>
<feature type="compositionally biased region" description="Basic and acidic residues" evidence="4">
    <location>
        <begin position="110"/>
        <end position="121"/>
    </location>
</feature>
<feature type="compositionally biased region" description="Low complexity" evidence="4">
    <location>
        <begin position="191"/>
        <end position="207"/>
    </location>
</feature>
<feature type="compositionally biased region" description="Low complexity" evidence="4">
    <location>
        <begin position="270"/>
        <end position="285"/>
    </location>
</feature>
<feature type="compositionally biased region" description="Low complexity" evidence="4">
    <location>
        <begin position="387"/>
        <end position="402"/>
    </location>
</feature>
<feature type="compositionally biased region" description="Low complexity" evidence="4">
    <location>
        <begin position="437"/>
        <end position="446"/>
    </location>
</feature>
<feature type="compositionally biased region" description="Low complexity" evidence="4">
    <location>
        <begin position="455"/>
        <end position="482"/>
    </location>
</feature>
<feature type="compositionally biased region" description="Pro residues" evidence="4">
    <location>
        <begin position="499"/>
        <end position="509"/>
    </location>
</feature>
<feature type="binding site" evidence="2">
    <location>
        <position position="620"/>
    </location>
    <ligand>
        <name>Ca(2+)</name>
        <dbReference type="ChEBI" id="CHEBI:29108"/>
        <label>1</label>
    </ligand>
</feature>
<feature type="binding site" evidence="2">
    <location>
        <position position="621"/>
    </location>
    <ligand>
        <name>Ca(2+)</name>
        <dbReference type="ChEBI" id="CHEBI:29108"/>
        <label>1</label>
    </ligand>
</feature>
<feature type="binding site" evidence="2">
    <location>
        <position position="627"/>
    </location>
    <ligand>
        <name>Ca(2+)</name>
        <dbReference type="ChEBI" id="CHEBI:29108"/>
        <label>1</label>
    </ligand>
</feature>
<feature type="binding site" evidence="2">
    <location>
        <position position="628"/>
    </location>
    <ligand>
        <name>Ca(2+)</name>
        <dbReference type="ChEBI" id="CHEBI:29108"/>
        <label>1</label>
    </ligand>
</feature>
<feature type="binding site" evidence="2">
    <location>
        <position position="628"/>
    </location>
    <ligand>
        <name>Ca(2+)</name>
        <dbReference type="ChEBI" id="CHEBI:29108"/>
        <label>2</label>
        <note>ligand shared between two neighboring subunits</note>
    </ligand>
</feature>
<feature type="modified residue" description="Hydroxyproline" evidence="6">
    <location>
        <position position="453"/>
    </location>
</feature>
<feature type="modified residue" description="Hydroxyproline" evidence="6">
    <location>
        <position position="456"/>
    </location>
</feature>
<feature type="sequence conflict" description="In Ref. 3; AA sequence." evidence="7" ref="3">
    <original>E</original>
    <variation>Q</variation>
    <location>
        <position position="25"/>
    </location>
</feature>
<sequence>MHLQISLLLLFCLNIVHGSDGYFSERYQKQSSIKGPPHFLPFNVKSQGVQMRGEQGPPGPPGPIGPRGQPGPAGKPGFGSPGPQGPPGPLGPPGFSTVGKLGMPGLPGKPGERGLNGEKGEAGPVGLPGARGPQGPPGIPGPAGLSVLGKPGPQGPPGAQGPRGPPGEKGEPGVPGINGQKGEMGFGVPGRPGNRGLPGPQGPQGLPGSAGIGKPGENGLPGQPGMKGDRGLPGARGEAGIPGPQGPPGEPGEVGIGKPGPMGPPGPAGIPGAKGLPGPAGLPGSPGLPGFGKPGLPGMKGHRGPEGPPGFPGPKGDQGPAGVPGELGPAGPQGNMGPQGLKGLPGENGLPGPKGDMGPVGPAGFPGAKGERGLPGLDGKPGYPGEQGLPGPKGHPGLPGQKGDTGHAGHPGLPGPVGPQGVKGVPGINGEPGPRGPSGIPGVRGPIGPPGMPGAPGAKGEAGAPGLPGPAGIVTKGLRGPMGPLGPPGPKGNSGEPGLPGPPGPPGPPGQSTIPEGYVKGESRELSGMSFMKAGANQALTGMPVSAFTVILSKAYPGATVPIKFDKILYNRQQHYDPRTGIFTCRIPGLYYFSYHVHAKGTNVWVALYKNGSPVMYTYDEYQKGYLDQASGSAVIDLMENDQVWLQLPNSESNGLYSSEYVHSSFSGFLFAQI</sequence>
<organism>
    <name type="scientific">Gallus gallus</name>
    <name type="common">Chicken</name>
    <dbReference type="NCBI Taxonomy" id="9031"/>
    <lineage>
        <taxon>Eukaryota</taxon>
        <taxon>Metazoa</taxon>
        <taxon>Chordata</taxon>
        <taxon>Craniata</taxon>
        <taxon>Vertebrata</taxon>
        <taxon>Euteleostomi</taxon>
        <taxon>Archelosauria</taxon>
        <taxon>Archosauria</taxon>
        <taxon>Dinosauria</taxon>
        <taxon>Saurischia</taxon>
        <taxon>Theropoda</taxon>
        <taxon>Coelurosauria</taxon>
        <taxon>Aves</taxon>
        <taxon>Neognathae</taxon>
        <taxon>Galloanserae</taxon>
        <taxon>Galliformes</taxon>
        <taxon>Phasianidae</taxon>
        <taxon>Phasianinae</taxon>
        <taxon>Gallus</taxon>
    </lineage>
</organism>
<comment type="function">
    <text>Type X collagen is a product of hypertrophic chondrocytes and has been localized to presumptive mineralization zones of hyaline cartilage.</text>
</comment>
<comment type="subunit">
    <text>Homotrimer.</text>
</comment>
<comment type="subcellular location">
    <subcellularLocation>
        <location evidence="1">Secreted</location>
        <location evidence="1">Extracellular space</location>
        <location evidence="1">Extracellular matrix</location>
    </subcellularLocation>
</comment>
<comment type="PTM">
    <text evidence="6">Prolines at the third position of the tripeptide repeating unit (G-X-Y) are hydroxylated in some or all of the chains.</text>
</comment>
<keyword id="KW-0106">Calcium</keyword>
<keyword id="KW-0176">Collagen</keyword>
<keyword id="KW-0903">Direct protein sequencing</keyword>
<keyword id="KW-0272">Extracellular matrix</keyword>
<keyword id="KW-0379">Hydroxylation</keyword>
<keyword id="KW-0479">Metal-binding</keyword>
<keyword id="KW-1185">Reference proteome</keyword>
<keyword id="KW-0677">Repeat</keyword>
<keyword id="KW-0964">Secreted</keyword>
<keyword id="KW-0732">Signal</keyword>
<dbReference type="EMBL" id="M13496">
    <property type="protein sequence ID" value="AAA48736.1"/>
    <property type="status" value="ALT_SEQ"/>
    <property type="molecule type" value="Genomic_DNA"/>
</dbReference>
<dbReference type="EMBL" id="J04194">
    <property type="protein sequence ID" value="AAA48634.1"/>
    <property type="molecule type" value="Genomic_DNA"/>
</dbReference>
<dbReference type="PIR" id="S23297">
    <property type="entry name" value="S23297"/>
</dbReference>
<dbReference type="SMR" id="P08125"/>
<dbReference type="FunCoup" id="P08125">
    <property type="interactions" value="29"/>
</dbReference>
<dbReference type="STRING" id="9031.ENSGALP00000024087"/>
<dbReference type="PaxDb" id="9031-ENSGALP00000024087"/>
<dbReference type="VEuPathDB" id="HostDB:geneid_100858979"/>
<dbReference type="eggNOG" id="ENOG502QS5V">
    <property type="taxonomic scope" value="Eukaryota"/>
</dbReference>
<dbReference type="InParanoid" id="P08125"/>
<dbReference type="OrthoDB" id="10021193at2759"/>
<dbReference type="PhylomeDB" id="P08125"/>
<dbReference type="PRO" id="PR:P08125"/>
<dbReference type="Proteomes" id="UP000000539">
    <property type="component" value="Unassembled WGS sequence"/>
</dbReference>
<dbReference type="GO" id="GO:0005581">
    <property type="term" value="C:collagen trimer"/>
    <property type="evidence" value="ECO:0007669"/>
    <property type="project" value="UniProtKB-KW"/>
</dbReference>
<dbReference type="GO" id="GO:0062023">
    <property type="term" value="C:collagen-containing extracellular matrix"/>
    <property type="evidence" value="ECO:0000318"/>
    <property type="project" value="GO_Central"/>
</dbReference>
<dbReference type="GO" id="GO:0005576">
    <property type="term" value="C:extracellular region"/>
    <property type="evidence" value="ECO:0000304"/>
    <property type="project" value="Reactome"/>
</dbReference>
<dbReference type="GO" id="GO:0005615">
    <property type="term" value="C:extracellular space"/>
    <property type="evidence" value="ECO:0000318"/>
    <property type="project" value="GO_Central"/>
</dbReference>
<dbReference type="GO" id="GO:0043235">
    <property type="term" value="C:receptor complex"/>
    <property type="evidence" value="ECO:0000314"/>
    <property type="project" value="MGI"/>
</dbReference>
<dbReference type="GO" id="GO:0030020">
    <property type="term" value="F:extracellular matrix structural constituent conferring tensile strength"/>
    <property type="evidence" value="ECO:0000318"/>
    <property type="project" value="GO_Central"/>
</dbReference>
<dbReference type="GO" id="GO:0046872">
    <property type="term" value="F:metal ion binding"/>
    <property type="evidence" value="ECO:0007669"/>
    <property type="project" value="UniProtKB-KW"/>
</dbReference>
<dbReference type="FunFam" id="2.60.120.40:FF:000001">
    <property type="entry name" value="Complement C1q B chain"/>
    <property type="match status" value="1"/>
</dbReference>
<dbReference type="Gene3D" id="2.60.120.40">
    <property type="match status" value="1"/>
</dbReference>
<dbReference type="InterPro" id="IPR001073">
    <property type="entry name" value="C1q_dom"/>
</dbReference>
<dbReference type="InterPro" id="IPR008160">
    <property type="entry name" value="Collagen"/>
</dbReference>
<dbReference type="InterPro" id="IPR050938">
    <property type="entry name" value="Collagen_Structural_Proteins"/>
</dbReference>
<dbReference type="InterPro" id="IPR008983">
    <property type="entry name" value="Tumour_necrosis_fac-like_dom"/>
</dbReference>
<dbReference type="PANTHER" id="PTHR37456:SF6">
    <property type="entry name" value="COLLAGEN ALPHA-1(XXIII) CHAIN-LIKE ISOFORM X2"/>
    <property type="match status" value="1"/>
</dbReference>
<dbReference type="PANTHER" id="PTHR37456">
    <property type="entry name" value="SI:CH211-266K2.1"/>
    <property type="match status" value="1"/>
</dbReference>
<dbReference type="Pfam" id="PF00386">
    <property type="entry name" value="C1q"/>
    <property type="match status" value="1"/>
</dbReference>
<dbReference type="Pfam" id="PF01391">
    <property type="entry name" value="Collagen"/>
    <property type="match status" value="2"/>
</dbReference>
<dbReference type="PRINTS" id="PR00007">
    <property type="entry name" value="COMPLEMNTC1Q"/>
</dbReference>
<dbReference type="SMART" id="SM00110">
    <property type="entry name" value="C1Q"/>
    <property type="match status" value="1"/>
</dbReference>
<dbReference type="SUPFAM" id="SSF49842">
    <property type="entry name" value="TNF-like"/>
    <property type="match status" value="1"/>
</dbReference>
<dbReference type="PROSITE" id="PS50871">
    <property type="entry name" value="C1Q"/>
    <property type="match status" value="1"/>
</dbReference>
<name>COAA1_CHICK</name>